<gene>
    <name type="primary">ectA</name>
    <name type="ordered locus">VC_A0825</name>
</gene>
<evidence type="ECO:0000250" key="1"/>
<evidence type="ECO:0000255" key="2">
    <source>
        <dbReference type="PROSITE-ProRule" id="PRU00532"/>
    </source>
</evidence>
<evidence type="ECO:0000305" key="3"/>
<proteinExistence type="inferred from homology"/>
<sequence length="173" mass="19987">MIYPQIMHKPALPWVFRRPTQEDGLSIHELIAQCAPLDQNSAYCNFLQSSHFQTTCLMAEQQELLVGFVSAYRKPEQQNELFIWQVAVHPSARGKGLAYQMLKHLLAREDLADITVLETTITRSNQASWRLFQKLDREQGEQGSVSTFLDETCHFEGEHDTEYLYRIPLQSSN</sequence>
<protein>
    <recommendedName>
        <fullName>L-2,4-diaminobutyric acid acetyltransferase</fullName>
        <shortName>DABA acetyltransferase</shortName>
        <ecNumber>2.3.1.178</ecNumber>
    </recommendedName>
</protein>
<comment type="function">
    <text evidence="1">Catalyzes the acetylation of L-2,4-diaminobutyrate (DABA) to gamma-N-acetyl-alpha,gamma-diaminobutyric acid (ADABA) with acetyl coenzyme A.</text>
</comment>
<comment type="catalytic activity">
    <reaction>
        <text>L-2,4-diaminobutanoate + acetyl-CoA = (2S)-4-acetamido-2-aminobutanoate + CoA + H(+)</text>
        <dbReference type="Rhea" id="RHEA:16901"/>
        <dbReference type="ChEBI" id="CHEBI:15378"/>
        <dbReference type="ChEBI" id="CHEBI:57287"/>
        <dbReference type="ChEBI" id="CHEBI:57288"/>
        <dbReference type="ChEBI" id="CHEBI:58761"/>
        <dbReference type="ChEBI" id="CHEBI:58929"/>
        <dbReference type="EC" id="2.3.1.178"/>
    </reaction>
</comment>
<comment type="pathway">
    <text>Amine and polyamine biosynthesis; ectoine biosynthesis; L-ectoine from L-aspartate 4-semialdehyde: step 2/3.</text>
</comment>
<comment type="similarity">
    <text evidence="3">Belongs to the acetyltransferase family. EctA subfamily.</text>
</comment>
<accession>Q9KLC1</accession>
<reference key="1">
    <citation type="journal article" date="2000" name="Nature">
        <title>DNA sequence of both chromosomes of the cholera pathogen Vibrio cholerae.</title>
        <authorList>
            <person name="Heidelberg J.F."/>
            <person name="Eisen J.A."/>
            <person name="Nelson W.C."/>
            <person name="Clayton R.A."/>
            <person name="Gwinn M.L."/>
            <person name="Dodson R.J."/>
            <person name="Haft D.H."/>
            <person name="Hickey E.K."/>
            <person name="Peterson J.D."/>
            <person name="Umayam L.A."/>
            <person name="Gill S.R."/>
            <person name="Nelson K.E."/>
            <person name="Read T.D."/>
            <person name="Tettelin H."/>
            <person name="Richardson D.L."/>
            <person name="Ermolaeva M.D."/>
            <person name="Vamathevan J.J."/>
            <person name="Bass S."/>
            <person name="Qin H."/>
            <person name="Dragoi I."/>
            <person name="Sellers P."/>
            <person name="McDonald L.A."/>
            <person name="Utterback T.R."/>
            <person name="Fleischmann R.D."/>
            <person name="Nierman W.C."/>
            <person name="White O."/>
            <person name="Salzberg S.L."/>
            <person name="Smith H.O."/>
            <person name="Colwell R.R."/>
            <person name="Mekalanos J.J."/>
            <person name="Venter J.C."/>
            <person name="Fraser C.M."/>
        </authorList>
    </citation>
    <scope>NUCLEOTIDE SEQUENCE [LARGE SCALE GENOMIC DNA]</scope>
    <source>
        <strain>ATCC 39315 / El Tor Inaba N16961</strain>
    </source>
</reference>
<keyword id="KW-0012">Acyltransferase</keyword>
<keyword id="KW-1185">Reference proteome</keyword>
<keyword id="KW-0808">Transferase</keyword>
<feature type="chain" id="PRO_0000220093" description="L-2,4-diaminobutyric acid acetyltransferase">
    <location>
        <begin position="1"/>
        <end position="173"/>
    </location>
</feature>
<feature type="domain" description="N-acetyltransferase" evidence="2">
    <location>
        <begin position="14"/>
        <end position="170"/>
    </location>
</feature>
<name>ECTA_VIBCH</name>
<dbReference type="EC" id="2.3.1.178"/>
<dbReference type="EMBL" id="AE003853">
    <property type="protein sequence ID" value="AAF96723.1"/>
    <property type="molecule type" value="Genomic_DNA"/>
</dbReference>
<dbReference type="PIR" id="A82413">
    <property type="entry name" value="A82413"/>
</dbReference>
<dbReference type="RefSeq" id="NP_233211.1">
    <property type="nucleotide sequence ID" value="NC_002506.1"/>
</dbReference>
<dbReference type="RefSeq" id="WP_000640101.1">
    <property type="nucleotide sequence ID" value="NC_002506.1"/>
</dbReference>
<dbReference type="SMR" id="Q9KLC1"/>
<dbReference type="STRING" id="243277.VC_A0825"/>
<dbReference type="DNASU" id="2612497"/>
<dbReference type="EnsemblBacteria" id="AAF96723">
    <property type="protein sequence ID" value="AAF96723"/>
    <property type="gene ID" value="VC_A0825"/>
</dbReference>
<dbReference type="KEGG" id="vch:VC_A0825"/>
<dbReference type="PATRIC" id="fig|243277.26.peg.3445"/>
<dbReference type="eggNOG" id="COG0456">
    <property type="taxonomic scope" value="Bacteria"/>
</dbReference>
<dbReference type="HOGENOM" id="CLU_111896_0_0_6"/>
<dbReference type="UniPathway" id="UPA00067">
    <property type="reaction ID" value="UER00122"/>
</dbReference>
<dbReference type="Proteomes" id="UP000000584">
    <property type="component" value="Chromosome 2"/>
</dbReference>
<dbReference type="GO" id="GO:0016747">
    <property type="term" value="F:acyltransferase activity, transferring groups other than amino-acyl groups"/>
    <property type="evidence" value="ECO:0000318"/>
    <property type="project" value="GO_Central"/>
</dbReference>
<dbReference type="GO" id="GO:0033816">
    <property type="term" value="F:diaminobutyrate acetyltransferase activity"/>
    <property type="evidence" value="ECO:0007669"/>
    <property type="project" value="UniProtKB-EC"/>
</dbReference>
<dbReference type="GO" id="GO:0019491">
    <property type="term" value="P:ectoine biosynthetic process"/>
    <property type="evidence" value="ECO:0007669"/>
    <property type="project" value="UniProtKB-UniPathway"/>
</dbReference>
<dbReference type="CDD" id="cd04301">
    <property type="entry name" value="NAT_SF"/>
    <property type="match status" value="1"/>
</dbReference>
<dbReference type="Gene3D" id="3.40.630.30">
    <property type="match status" value="1"/>
</dbReference>
<dbReference type="InterPro" id="IPR016181">
    <property type="entry name" value="Acyl_CoA_acyltransferase"/>
</dbReference>
<dbReference type="InterPro" id="IPR012772">
    <property type="entry name" value="Ectoine_EctA"/>
</dbReference>
<dbReference type="InterPro" id="IPR000182">
    <property type="entry name" value="GNAT_dom"/>
</dbReference>
<dbReference type="NCBIfam" id="TIGR02406">
    <property type="entry name" value="ectoine_EctA"/>
    <property type="match status" value="1"/>
</dbReference>
<dbReference type="PANTHER" id="PTHR43072">
    <property type="entry name" value="N-ACETYLTRANSFERASE"/>
    <property type="match status" value="1"/>
</dbReference>
<dbReference type="PANTHER" id="PTHR43072:SF23">
    <property type="entry name" value="UPF0039 PROTEIN C11D3.02C"/>
    <property type="match status" value="1"/>
</dbReference>
<dbReference type="Pfam" id="PF00583">
    <property type="entry name" value="Acetyltransf_1"/>
    <property type="match status" value="1"/>
</dbReference>
<dbReference type="SUPFAM" id="SSF55729">
    <property type="entry name" value="Acyl-CoA N-acyltransferases (Nat)"/>
    <property type="match status" value="1"/>
</dbReference>
<dbReference type="PROSITE" id="PS51186">
    <property type="entry name" value="GNAT"/>
    <property type="match status" value="1"/>
</dbReference>
<organism>
    <name type="scientific">Vibrio cholerae serotype O1 (strain ATCC 39315 / El Tor Inaba N16961)</name>
    <dbReference type="NCBI Taxonomy" id="243277"/>
    <lineage>
        <taxon>Bacteria</taxon>
        <taxon>Pseudomonadati</taxon>
        <taxon>Pseudomonadota</taxon>
        <taxon>Gammaproteobacteria</taxon>
        <taxon>Vibrionales</taxon>
        <taxon>Vibrionaceae</taxon>
        <taxon>Vibrio</taxon>
    </lineage>
</organism>